<feature type="chain" id="PRO_0000413934" description="Negative modulator of initiation of replication">
    <location>
        <begin position="1"/>
        <end position="180"/>
    </location>
</feature>
<feature type="region of interest" description="Interaction with DNA" evidence="1">
    <location>
        <begin position="86"/>
        <end position="87"/>
    </location>
</feature>
<feature type="region of interest" description="Interaction with DNA" evidence="1">
    <location>
        <begin position="115"/>
        <end position="119"/>
    </location>
</feature>
<feature type="region of interest" description="Interaction with DNA" evidence="1">
    <location>
        <begin position="149"/>
        <end position="155"/>
    </location>
</feature>
<comment type="function">
    <text evidence="1">Negative regulator of replication initiation, which contributes to regulation of DNA replication and ensures that replication initiation occurs exactly once per chromosome per cell cycle. Binds to pairs of hemimethylated GATC sequences in the oriC region, thus preventing assembly of replication proteins and re-initiation at newly replicated origins. Repression is relieved when the region becomes fully methylated.</text>
</comment>
<comment type="subunit">
    <text evidence="1">Homodimer. Polymerizes to form helical filaments.</text>
</comment>
<comment type="subcellular location">
    <subcellularLocation>
        <location evidence="1">Cytoplasm</location>
    </subcellularLocation>
</comment>
<comment type="similarity">
    <text evidence="1">Belongs to the SeqA family.</text>
</comment>
<organism>
    <name type="scientific">Salmonella typhimurium (strain LT2 / SGSC1412 / ATCC 700720)</name>
    <dbReference type="NCBI Taxonomy" id="99287"/>
    <lineage>
        <taxon>Bacteria</taxon>
        <taxon>Pseudomonadati</taxon>
        <taxon>Pseudomonadota</taxon>
        <taxon>Gammaproteobacteria</taxon>
        <taxon>Enterobacterales</taxon>
        <taxon>Enterobacteriaceae</taxon>
        <taxon>Salmonella</taxon>
    </lineage>
</organism>
<reference key="1">
    <citation type="journal article" date="2001" name="Nature">
        <title>Complete genome sequence of Salmonella enterica serovar Typhimurium LT2.</title>
        <authorList>
            <person name="McClelland M."/>
            <person name="Sanderson K.E."/>
            <person name="Spieth J."/>
            <person name="Clifton S.W."/>
            <person name="Latreille P."/>
            <person name="Courtney L."/>
            <person name="Porwollik S."/>
            <person name="Ali J."/>
            <person name="Dante M."/>
            <person name="Du F."/>
            <person name="Hou S."/>
            <person name="Layman D."/>
            <person name="Leonard S."/>
            <person name="Nguyen C."/>
            <person name="Scott K."/>
            <person name="Holmes A."/>
            <person name="Grewal N."/>
            <person name="Mulvaney E."/>
            <person name="Ryan E."/>
            <person name="Sun H."/>
            <person name="Florea L."/>
            <person name="Miller W."/>
            <person name="Stoneking T."/>
            <person name="Nhan M."/>
            <person name="Waterston R."/>
            <person name="Wilson R.K."/>
        </authorList>
    </citation>
    <scope>NUCLEOTIDE SEQUENCE [LARGE SCALE GENOMIC DNA]</scope>
    <source>
        <strain>LT2 / SGSC1412 / ATCC 700720</strain>
    </source>
</reference>
<protein>
    <recommendedName>
        <fullName evidence="1">Negative modulator of initiation of replication</fullName>
    </recommendedName>
</protein>
<proteinExistence type="inferred from homology"/>
<keyword id="KW-0963">Cytoplasm</keyword>
<keyword id="KW-0236">DNA replication inhibitor</keyword>
<keyword id="KW-0238">DNA-binding</keyword>
<keyword id="KW-1185">Reference proteome</keyword>
<sequence>MKTIEVDDELYSYIASHTKHIGESASDILRRMLKFSATTQPTASAVKGTPAAQPVAEAKPVNPVKDKVRAMRELLLSDEYAEQKKAVNRFMLILTTLYSLDHHAFAEATESLHGRTRVYFAADEQTLLKNGNQTKPKHVPGTPYWVITNTNTGRKCSMIEHIMQSMQFPAELIEKVCGTI</sequence>
<name>SEQA_SALTY</name>
<evidence type="ECO:0000255" key="1">
    <source>
        <dbReference type="HAMAP-Rule" id="MF_00908"/>
    </source>
</evidence>
<dbReference type="EMBL" id="AE006468">
    <property type="protein sequence ID" value="AAL19641.1"/>
    <property type="molecule type" value="Genomic_DNA"/>
</dbReference>
<dbReference type="RefSeq" id="NP_459682.1">
    <property type="nucleotide sequence ID" value="NC_003197.2"/>
</dbReference>
<dbReference type="RefSeq" id="WP_000848395.1">
    <property type="nucleotide sequence ID" value="NC_003197.2"/>
</dbReference>
<dbReference type="SMR" id="Q7CQY1"/>
<dbReference type="STRING" id="99287.STM0697"/>
<dbReference type="PaxDb" id="99287-STM0697"/>
<dbReference type="GeneID" id="1252217"/>
<dbReference type="KEGG" id="stm:STM0697"/>
<dbReference type="PATRIC" id="fig|99287.12.peg.729"/>
<dbReference type="HOGENOM" id="CLU_099733_0_0_6"/>
<dbReference type="PhylomeDB" id="Q7CQY1"/>
<dbReference type="BioCyc" id="SENT99287:STM0697-MONOMER"/>
<dbReference type="Proteomes" id="UP000001014">
    <property type="component" value="Chromosome"/>
</dbReference>
<dbReference type="GO" id="GO:0005737">
    <property type="term" value="C:cytoplasm"/>
    <property type="evidence" value="ECO:0007669"/>
    <property type="project" value="UniProtKB-SubCell"/>
</dbReference>
<dbReference type="GO" id="GO:0043565">
    <property type="term" value="F:sequence-specific DNA binding"/>
    <property type="evidence" value="ECO:0007669"/>
    <property type="project" value="UniProtKB-ARBA"/>
</dbReference>
<dbReference type="GO" id="GO:0032297">
    <property type="term" value="P:negative regulation of DNA-templated DNA replication initiation"/>
    <property type="evidence" value="ECO:0007669"/>
    <property type="project" value="UniProtKB-UniRule"/>
</dbReference>
<dbReference type="GO" id="GO:0006355">
    <property type="term" value="P:regulation of DNA-templated transcription"/>
    <property type="evidence" value="ECO:0007669"/>
    <property type="project" value="InterPro"/>
</dbReference>
<dbReference type="FunFam" id="1.10.1220.10:FF:000002">
    <property type="entry name" value="Negative modulator of initiation of replication"/>
    <property type="match status" value="1"/>
</dbReference>
<dbReference type="FunFam" id="1.20.1380.10:FF:000001">
    <property type="entry name" value="Negative modulator of initiation of replication"/>
    <property type="match status" value="1"/>
</dbReference>
<dbReference type="Gene3D" id="1.10.1220.10">
    <property type="entry name" value="Met repressor-like"/>
    <property type="match status" value="1"/>
</dbReference>
<dbReference type="Gene3D" id="1.20.1380.10">
    <property type="entry name" value="Replication modulator SeqA, C-terminal DNA-binding domain"/>
    <property type="match status" value="1"/>
</dbReference>
<dbReference type="HAMAP" id="MF_00908">
    <property type="entry name" value="SeqA"/>
    <property type="match status" value="1"/>
</dbReference>
<dbReference type="InterPro" id="IPR013321">
    <property type="entry name" value="Arc_rbn_hlx_hlx"/>
</dbReference>
<dbReference type="InterPro" id="IPR010985">
    <property type="entry name" value="Ribbon_hlx_hlx"/>
</dbReference>
<dbReference type="InterPro" id="IPR005621">
    <property type="entry name" value="SeqA"/>
</dbReference>
<dbReference type="InterPro" id="IPR026577">
    <property type="entry name" value="SeqA_DNA-bd_C"/>
</dbReference>
<dbReference type="InterPro" id="IPR036835">
    <property type="entry name" value="SeqA_DNA-bd_C_sf"/>
</dbReference>
<dbReference type="InterPro" id="IPR033761">
    <property type="entry name" value="SeqA_N"/>
</dbReference>
<dbReference type="NCBIfam" id="NF008389">
    <property type="entry name" value="PRK11187.1"/>
    <property type="match status" value="1"/>
</dbReference>
<dbReference type="Pfam" id="PF03925">
    <property type="entry name" value="SeqA"/>
    <property type="match status" value="1"/>
</dbReference>
<dbReference type="Pfam" id="PF17206">
    <property type="entry name" value="SeqA_N"/>
    <property type="match status" value="1"/>
</dbReference>
<dbReference type="PIRSF" id="PIRSF019401">
    <property type="entry name" value="SeqA"/>
    <property type="match status" value="1"/>
</dbReference>
<dbReference type="SUPFAM" id="SSF82808">
    <property type="entry name" value="Replication modulator SeqA, C-terminal DNA-binding domain"/>
    <property type="match status" value="1"/>
</dbReference>
<dbReference type="SUPFAM" id="SSF47598">
    <property type="entry name" value="Ribbon-helix-helix"/>
    <property type="match status" value="1"/>
</dbReference>
<gene>
    <name evidence="1" type="primary">seqA</name>
    <name type="ordered locus">STM0697</name>
</gene>
<accession>Q7CQY1</accession>